<dbReference type="EMBL" id="CP000350">
    <property type="protein sequence ID" value="ABJ77064.1"/>
    <property type="molecule type" value="Genomic_DNA"/>
</dbReference>
<dbReference type="RefSeq" id="WP_011669440.1">
    <property type="nucleotide sequence ID" value="NC_008510.1"/>
</dbReference>
<dbReference type="SMR" id="Q04PV6"/>
<dbReference type="KEGG" id="lbj:LBJ_2641"/>
<dbReference type="HOGENOM" id="CLU_131047_1_1_12"/>
<dbReference type="Proteomes" id="UP000000656">
    <property type="component" value="Chromosome 1"/>
</dbReference>
<dbReference type="GO" id="GO:0022625">
    <property type="term" value="C:cytosolic large ribosomal subunit"/>
    <property type="evidence" value="ECO:0007669"/>
    <property type="project" value="TreeGrafter"/>
</dbReference>
<dbReference type="GO" id="GO:0003735">
    <property type="term" value="F:structural constituent of ribosome"/>
    <property type="evidence" value="ECO:0007669"/>
    <property type="project" value="InterPro"/>
</dbReference>
<dbReference type="GO" id="GO:0006412">
    <property type="term" value="P:translation"/>
    <property type="evidence" value="ECO:0007669"/>
    <property type="project" value="UniProtKB-UniRule"/>
</dbReference>
<dbReference type="CDD" id="cd01658">
    <property type="entry name" value="Ribosomal_L30"/>
    <property type="match status" value="1"/>
</dbReference>
<dbReference type="FunFam" id="3.30.1390.20:FF:000011">
    <property type="entry name" value="50S ribosomal protein L30"/>
    <property type="match status" value="1"/>
</dbReference>
<dbReference type="Gene3D" id="3.30.1390.20">
    <property type="entry name" value="Ribosomal protein L30, ferredoxin-like fold domain"/>
    <property type="match status" value="1"/>
</dbReference>
<dbReference type="HAMAP" id="MF_01371_B">
    <property type="entry name" value="Ribosomal_uL30_B"/>
    <property type="match status" value="1"/>
</dbReference>
<dbReference type="InterPro" id="IPR036919">
    <property type="entry name" value="Ribo_uL30_ferredoxin-like_sf"/>
</dbReference>
<dbReference type="InterPro" id="IPR005996">
    <property type="entry name" value="Ribosomal_uL30_bac-type"/>
</dbReference>
<dbReference type="InterPro" id="IPR018038">
    <property type="entry name" value="Ribosomal_uL30_CS"/>
</dbReference>
<dbReference type="InterPro" id="IPR016082">
    <property type="entry name" value="Ribosomal_uL30_ferredoxin-like"/>
</dbReference>
<dbReference type="NCBIfam" id="TIGR01308">
    <property type="entry name" value="rpmD_bact"/>
    <property type="match status" value="1"/>
</dbReference>
<dbReference type="PANTHER" id="PTHR15892:SF2">
    <property type="entry name" value="LARGE RIBOSOMAL SUBUNIT PROTEIN UL30M"/>
    <property type="match status" value="1"/>
</dbReference>
<dbReference type="PANTHER" id="PTHR15892">
    <property type="entry name" value="MITOCHONDRIAL RIBOSOMAL PROTEIN L30"/>
    <property type="match status" value="1"/>
</dbReference>
<dbReference type="Pfam" id="PF00327">
    <property type="entry name" value="Ribosomal_L30"/>
    <property type="match status" value="1"/>
</dbReference>
<dbReference type="PIRSF" id="PIRSF002211">
    <property type="entry name" value="Ribosomal_L30_bac-type"/>
    <property type="match status" value="1"/>
</dbReference>
<dbReference type="SUPFAM" id="SSF55129">
    <property type="entry name" value="Ribosomal protein L30p/L7e"/>
    <property type="match status" value="1"/>
</dbReference>
<dbReference type="PROSITE" id="PS00634">
    <property type="entry name" value="RIBOSOMAL_L30"/>
    <property type="match status" value="1"/>
</dbReference>
<accession>Q04PV6</accession>
<sequence length="59" mass="6696">MENIIVTQVKSSIGVKKEHRLTLHALGLRKTGQQRKHKVSPELQGMLDSVRHLIKVEKA</sequence>
<name>RL30_LEPBJ</name>
<comment type="subunit">
    <text evidence="1">Part of the 50S ribosomal subunit.</text>
</comment>
<comment type="similarity">
    <text evidence="1">Belongs to the universal ribosomal protein uL30 family.</text>
</comment>
<proteinExistence type="inferred from homology"/>
<feature type="chain" id="PRO_1000056061" description="Large ribosomal subunit protein uL30">
    <location>
        <begin position="1"/>
        <end position="59"/>
    </location>
</feature>
<keyword id="KW-0687">Ribonucleoprotein</keyword>
<keyword id="KW-0689">Ribosomal protein</keyword>
<reference key="1">
    <citation type="journal article" date="2006" name="Proc. Natl. Acad. Sci. U.S.A.">
        <title>Genome reduction in Leptospira borgpetersenii reflects limited transmission potential.</title>
        <authorList>
            <person name="Bulach D.M."/>
            <person name="Zuerner R.L."/>
            <person name="Wilson P."/>
            <person name="Seemann T."/>
            <person name="McGrath A."/>
            <person name="Cullen P.A."/>
            <person name="Davis J."/>
            <person name="Johnson M."/>
            <person name="Kuczek E."/>
            <person name="Alt D.P."/>
            <person name="Peterson-Burch B."/>
            <person name="Coppel R.L."/>
            <person name="Rood J.I."/>
            <person name="Davies J.K."/>
            <person name="Adler B."/>
        </authorList>
    </citation>
    <scope>NUCLEOTIDE SEQUENCE [LARGE SCALE GENOMIC DNA]</scope>
    <source>
        <strain>JB197</strain>
    </source>
</reference>
<protein>
    <recommendedName>
        <fullName evidence="1">Large ribosomal subunit protein uL30</fullName>
    </recommendedName>
    <alternativeName>
        <fullName evidence="2">50S ribosomal protein L30</fullName>
    </alternativeName>
</protein>
<organism>
    <name type="scientific">Leptospira borgpetersenii serovar Hardjo-bovis (strain JB197)</name>
    <dbReference type="NCBI Taxonomy" id="355277"/>
    <lineage>
        <taxon>Bacteria</taxon>
        <taxon>Pseudomonadati</taxon>
        <taxon>Spirochaetota</taxon>
        <taxon>Spirochaetia</taxon>
        <taxon>Leptospirales</taxon>
        <taxon>Leptospiraceae</taxon>
        <taxon>Leptospira</taxon>
    </lineage>
</organism>
<evidence type="ECO:0000255" key="1">
    <source>
        <dbReference type="HAMAP-Rule" id="MF_01371"/>
    </source>
</evidence>
<evidence type="ECO:0000305" key="2"/>
<gene>
    <name evidence="1" type="primary">rpmD</name>
    <name type="ordered locus">LBJ_2641</name>
</gene>